<organism evidence="7">
    <name type="scientific">Drosophila melanogaster</name>
    <name type="common">Fruit fly</name>
    <dbReference type="NCBI Taxonomy" id="7227"/>
    <lineage>
        <taxon>Eukaryota</taxon>
        <taxon>Metazoa</taxon>
        <taxon>Ecdysozoa</taxon>
        <taxon>Arthropoda</taxon>
        <taxon>Hexapoda</taxon>
        <taxon>Insecta</taxon>
        <taxon>Pterygota</taxon>
        <taxon>Neoptera</taxon>
        <taxon>Endopterygota</taxon>
        <taxon>Diptera</taxon>
        <taxon>Brachycera</taxon>
        <taxon>Muscomorpha</taxon>
        <taxon>Ephydroidea</taxon>
        <taxon>Drosophilidae</taxon>
        <taxon>Drosophila</taxon>
        <taxon>Sophophora</taxon>
    </lineage>
</organism>
<evidence type="ECO:0000255" key="1"/>
<evidence type="ECO:0000255" key="2">
    <source>
        <dbReference type="PROSITE-ProRule" id="PRU00498"/>
    </source>
</evidence>
<evidence type="ECO:0000269" key="3">
    <source>
    </source>
</evidence>
<evidence type="ECO:0000303" key="4">
    <source>
    </source>
</evidence>
<evidence type="ECO:0000305" key="5"/>
<evidence type="ECO:0000312" key="6">
    <source>
        <dbReference type="FlyBase" id="FBgn0030522"/>
    </source>
</evidence>
<evidence type="ECO:0000312" key="7">
    <source>
        <dbReference type="Proteomes" id="UP000000803"/>
    </source>
</evidence>
<name>TM2D2_DROME</name>
<accession>Q9VY86</accession>
<keyword id="KW-0325">Glycoprotein</keyword>
<keyword id="KW-0472">Membrane</keyword>
<keyword id="KW-1185">Reference proteome</keyword>
<keyword id="KW-0732">Signal</keyword>
<keyword id="KW-0812">Transmembrane</keyword>
<keyword id="KW-1133">Transmembrane helix</keyword>
<protein>
    <recommendedName>
        <fullName evidence="4">TM2 domain-containing protein amaretto</fullName>
        <shortName evidence="5">TM2D2</shortName>
    </recommendedName>
</protein>
<feature type="signal peptide" evidence="1">
    <location>
        <begin position="1"/>
        <end position="18"/>
    </location>
</feature>
<feature type="chain" id="PRO_0000298998" description="TM2 domain-containing protein amaretto">
    <location>
        <begin position="19"/>
        <end position="224"/>
    </location>
</feature>
<feature type="topological domain" description="Extracellular" evidence="5">
    <location>
        <begin position="19"/>
        <end position="154"/>
    </location>
</feature>
<feature type="transmembrane region" description="Helical" evidence="1">
    <location>
        <begin position="155"/>
        <end position="175"/>
    </location>
</feature>
<feature type="topological domain" description="Cytoplasmic" evidence="5">
    <location>
        <begin position="176"/>
        <end position="189"/>
    </location>
</feature>
<feature type="transmembrane region" description="Helical" evidence="1">
    <location>
        <begin position="190"/>
        <end position="210"/>
    </location>
</feature>
<feature type="topological domain" description="Extracellular" evidence="5">
    <location>
        <begin position="211"/>
        <end position="224"/>
    </location>
</feature>
<feature type="domain" description="TM2" evidence="1">
    <location>
        <begin position="157"/>
        <end position="205"/>
    </location>
</feature>
<feature type="glycosylation site" description="N-linked (GlcNAc...) asparagine" evidence="2">
    <location>
        <position position="102"/>
    </location>
</feature>
<feature type="glycosylation site" description="N-linked (GlcNAc...) asparagine" evidence="2">
    <location>
        <position position="142"/>
    </location>
</feature>
<proteinExistence type="evidence at transcript level"/>
<reference key="1">
    <citation type="journal article" date="2000" name="Science">
        <title>The genome sequence of Drosophila melanogaster.</title>
        <authorList>
            <person name="Adams M.D."/>
            <person name="Celniker S.E."/>
            <person name="Holt R.A."/>
            <person name="Evans C.A."/>
            <person name="Gocayne J.D."/>
            <person name="Amanatides P.G."/>
            <person name="Scherer S.E."/>
            <person name="Li P.W."/>
            <person name="Hoskins R.A."/>
            <person name="Galle R.F."/>
            <person name="George R.A."/>
            <person name="Lewis S.E."/>
            <person name="Richards S."/>
            <person name="Ashburner M."/>
            <person name="Henderson S.N."/>
            <person name="Sutton G.G."/>
            <person name="Wortman J.R."/>
            <person name="Yandell M.D."/>
            <person name="Zhang Q."/>
            <person name="Chen L.X."/>
            <person name="Brandon R.C."/>
            <person name="Rogers Y.-H.C."/>
            <person name="Blazej R.G."/>
            <person name="Champe M."/>
            <person name="Pfeiffer B.D."/>
            <person name="Wan K.H."/>
            <person name="Doyle C."/>
            <person name="Baxter E.G."/>
            <person name="Helt G."/>
            <person name="Nelson C.R."/>
            <person name="Miklos G.L.G."/>
            <person name="Abril J.F."/>
            <person name="Agbayani A."/>
            <person name="An H.-J."/>
            <person name="Andrews-Pfannkoch C."/>
            <person name="Baldwin D."/>
            <person name="Ballew R.M."/>
            <person name="Basu A."/>
            <person name="Baxendale J."/>
            <person name="Bayraktaroglu L."/>
            <person name="Beasley E.M."/>
            <person name="Beeson K.Y."/>
            <person name="Benos P.V."/>
            <person name="Berman B.P."/>
            <person name="Bhandari D."/>
            <person name="Bolshakov S."/>
            <person name="Borkova D."/>
            <person name="Botchan M.R."/>
            <person name="Bouck J."/>
            <person name="Brokstein P."/>
            <person name="Brottier P."/>
            <person name="Burtis K.C."/>
            <person name="Busam D.A."/>
            <person name="Butler H."/>
            <person name="Cadieu E."/>
            <person name="Center A."/>
            <person name="Chandra I."/>
            <person name="Cherry J.M."/>
            <person name="Cawley S."/>
            <person name="Dahlke C."/>
            <person name="Davenport L.B."/>
            <person name="Davies P."/>
            <person name="de Pablos B."/>
            <person name="Delcher A."/>
            <person name="Deng Z."/>
            <person name="Mays A.D."/>
            <person name="Dew I."/>
            <person name="Dietz S.M."/>
            <person name="Dodson K."/>
            <person name="Doup L.E."/>
            <person name="Downes M."/>
            <person name="Dugan-Rocha S."/>
            <person name="Dunkov B.C."/>
            <person name="Dunn P."/>
            <person name="Durbin K.J."/>
            <person name="Evangelista C.C."/>
            <person name="Ferraz C."/>
            <person name="Ferriera S."/>
            <person name="Fleischmann W."/>
            <person name="Fosler C."/>
            <person name="Gabrielian A.E."/>
            <person name="Garg N.S."/>
            <person name="Gelbart W.M."/>
            <person name="Glasser K."/>
            <person name="Glodek A."/>
            <person name="Gong F."/>
            <person name="Gorrell J.H."/>
            <person name="Gu Z."/>
            <person name="Guan P."/>
            <person name="Harris M."/>
            <person name="Harris N.L."/>
            <person name="Harvey D.A."/>
            <person name="Heiman T.J."/>
            <person name="Hernandez J.R."/>
            <person name="Houck J."/>
            <person name="Hostin D."/>
            <person name="Houston K.A."/>
            <person name="Howland T.J."/>
            <person name="Wei M.-H."/>
            <person name="Ibegwam C."/>
            <person name="Jalali M."/>
            <person name="Kalush F."/>
            <person name="Karpen G.H."/>
            <person name="Ke Z."/>
            <person name="Kennison J.A."/>
            <person name="Ketchum K.A."/>
            <person name="Kimmel B.E."/>
            <person name="Kodira C.D."/>
            <person name="Kraft C.L."/>
            <person name="Kravitz S."/>
            <person name="Kulp D."/>
            <person name="Lai Z."/>
            <person name="Lasko P."/>
            <person name="Lei Y."/>
            <person name="Levitsky A.A."/>
            <person name="Li J.H."/>
            <person name="Li Z."/>
            <person name="Liang Y."/>
            <person name="Lin X."/>
            <person name="Liu X."/>
            <person name="Mattei B."/>
            <person name="McIntosh T.C."/>
            <person name="McLeod M.P."/>
            <person name="McPherson D."/>
            <person name="Merkulov G."/>
            <person name="Milshina N.V."/>
            <person name="Mobarry C."/>
            <person name="Morris J."/>
            <person name="Moshrefi A."/>
            <person name="Mount S.M."/>
            <person name="Moy M."/>
            <person name="Murphy B."/>
            <person name="Murphy L."/>
            <person name="Muzny D.M."/>
            <person name="Nelson D.L."/>
            <person name="Nelson D.R."/>
            <person name="Nelson K.A."/>
            <person name="Nixon K."/>
            <person name="Nusskern D.R."/>
            <person name="Pacleb J.M."/>
            <person name="Palazzolo M."/>
            <person name="Pittman G.S."/>
            <person name="Pan S."/>
            <person name="Pollard J."/>
            <person name="Puri V."/>
            <person name="Reese M.G."/>
            <person name="Reinert K."/>
            <person name="Remington K."/>
            <person name="Saunders R.D.C."/>
            <person name="Scheeler F."/>
            <person name="Shen H."/>
            <person name="Shue B.C."/>
            <person name="Siden-Kiamos I."/>
            <person name="Simpson M."/>
            <person name="Skupski M.P."/>
            <person name="Smith T.J."/>
            <person name="Spier E."/>
            <person name="Spradling A.C."/>
            <person name="Stapleton M."/>
            <person name="Strong R."/>
            <person name="Sun E."/>
            <person name="Svirskas R."/>
            <person name="Tector C."/>
            <person name="Turner R."/>
            <person name="Venter E."/>
            <person name="Wang A.H."/>
            <person name="Wang X."/>
            <person name="Wang Z.-Y."/>
            <person name="Wassarman D.A."/>
            <person name="Weinstock G.M."/>
            <person name="Weissenbach J."/>
            <person name="Williams S.M."/>
            <person name="Woodage T."/>
            <person name="Worley K.C."/>
            <person name="Wu D."/>
            <person name="Yang S."/>
            <person name="Yao Q.A."/>
            <person name="Ye J."/>
            <person name="Yeh R.-F."/>
            <person name="Zaveri J.S."/>
            <person name="Zhan M."/>
            <person name="Zhang G."/>
            <person name="Zhao Q."/>
            <person name="Zheng L."/>
            <person name="Zheng X.H."/>
            <person name="Zhong F.N."/>
            <person name="Zhong W."/>
            <person name="Zhou X."/>
            <person name="Zhu S.C."/>
            <person name="Zhu X."/>
            <person name="Smith H.O."/>
            <person name="Gibbs R.A."/>
            <person name="Myers E.W."/>
            <person name="Rubin G.M."/>
            <person name="Venter J.C."/>
        </authorList>
    </citation>
    <scope>NUCLEOTIDE SEQUENCE [LARGE SCALE GENOMIC DNA]</scope>
    <source>
        <strain>Berkeley</strain>
    </source>
</reference>
<reference key="2">
    <citation type="journal article" date="2002" name="Genome Biol.">
        <title>Annotation of the Drosophila melanogaster euchromatic genome: a systematic review.</title>
        <authorList>
            <person name="Misra S."/>
            <person name="Crosby M.A."/>
            <person name="Mungall C.J."/>
            <person name="Matthews B.B."/>
            <person name="Campbell K.S."/>
            <person name="Hradecky P."/>
            <person name="Huang Y."/>
            <person name="Kaminker J.S."/>
            <person name="Millburn G.H."/>
            <person name="Prochnik S.E."/>
            <person name="Smith C.D."/>
            <person name="Tupy J.L."/>
            <person name="Whitfield E.J."/>
            <person name="Bayraktaroglu L."/>
            <person name="Berman B.P."/>
            <person name="Bettencourt B.R."/>
            <person name="Celniker S.E."/>
            <person name="de Grey A.D.N.J."/>
            <person name="Drysdale R.A."/>
            <person name="Harris N.L."/>
            <person name="Richter J."/>
            <person name="Russo S."/>
            <person name="Schroeder A.J."/>
            <person name="Shu S.Q."/>
            <person name="Stapleton M."/>
            <person name="Yamada C."/>
            <person name="Ashburner M."/>
            <person name="Gelbart W.M."/>
            <person name="Rubin G.M."/>
            <person name="Lewis S.E."/>
        </authorList>
    </citation>
    <scope>GENOME REANNOTATION</scope>
    <source>
        <strain>Berkeley</strain>
    </source>
</reference>
<reference key="3">
    <citation type="journal article" date="2002" name="Genome Biol.">
        <title>A Drosophila full-length cDNA resource.</title>
        <authorList>
            <person name="Stapleton M."/>
            <person name="Carlson J.W."/>
            <person name="Brokstein P."/>
            <person name="Yu C."/>
            <person name="Champe M."/>
            <person name="George R.A."/>
            <person name="Guarin H."/>
            <person name="Kronmiller B."/>
            <person name="Pacleb J.M."/>
            <person name="Park S."/>
            <person name="Wan K.H."/>
            <person name="Rubin G.M."/>
            <person name="Celniker S.E."/>
        </authorList>
    </citation>
    <scope>NUCLEOTIDE SEQUENCE [LARGE SCALE MRNA] OF 6-224</scope>
    <source>
        <strain>Berkeley</strain>
        <tissue>Larva</tissue>
        <tissue>Pupae</tissue>
    </source>
</reference>
<reference key="4">
    <citation type="journal article" date="2021" name="PLoS Genet.">
        <title>TM2D genes regulate Notch signaling and neuronal function in Drosophila.</title>
        <authorList>
            <person name="Salazar J.L."/>
            <person name="Yang S.A."/>
            <person name="Lin Y.Q."/>
            <person name="Li-Kroeger D."/>
            <person name="Marcogliese P.C."/>
            <person name="Deal S.L."/>
            <person name="Neely G.G."/>
            <person name="Yamamoto S."/>
        </authorList>
    </citation>
    <scope>FUNCTION</scope>
    <scope>DISRUPTION PHENOTYPE</scope>
</reference>
<dbReference type="EMBL" id="AE014298">
    <property type="protein sequence ID" value="AAF48318.2"/>
    <property type="status" value="ALT_SEQ"/>
    <property type="molecule type" value="Genomic_DNA"/>
</dbReference>
<dbReference type="EMBL" id="AY119007">
    <property type="protein sequence ID" value="AAM50867.1"/>
    <property type="status" value="ALT_INIT"/>
    <property type="molecule type" value="mRNA"/>
</dbReference>
<dbReference type="RefSeq" id="NP_001033842.2">
    <property type="nucleotide sequence ID" value="NM_001038753.2"/>
</dbReference>
<dbReference type="SMR" id="Q9VY86"/>
<dbReference type="FunCoup" id="Q9VY86">
    <property type="interactions" value="559"/>
</dbReference>
<dbReference type="STRING" id="7227.FBpp0099588"/>
<dbReference type="GlyGen" id="Q9VY86">
    <property type="glycosylation" value="2 sites"/>
</dbReference>
<dbReference type="PaxDb" id="7227-FBpp0099588"/>
<dbReference type="DNASU" id="32342"/>
<dbReference type="EnsemblMetazoa" id="FBtr0479736">
    <property type="protein sequence ID" value="FBpp0428079"/>
    <property type="gene ID" value="FBgn0030522"/>
</dbReference>
<dbReference type="GeneID" id="32342"/>
<dbReference type="KEGG" id="dme:Dmel_CG11103"/>
<dbReference type="UCSC" id="CG11103-RB">
    <property type="organism name" value="d. melanogaster"/>
</dbReference>
<dbReference type="AGR" id="FB:FBgn0030522"/>
<dbReference type="CTD" id="32342"/>
<dbReference type="FlyBase" id="FBgn0030522">
    <property type="gene designation" value="amrt"/>
</dbReference>
<dbReference type="VEuPathDB" id="VectorBase:FBgn0030522"/>
<dbReference type="eggNOG" id="KOG4272">
    <property type="taxonomic scope" value="Eukaryota"/>
</dbReference>
<dbReference type="GeneTree" id="ENSGT00730000111181"/>
<dbReference type="HOGENOM" id="CLU_084872_3_1_1"/>
<dbReference type="InParanoid" id="Q9VY86"/>
<dbReference type="OMA" id="PIDHKGN"/>
<dbReference type="OrthoDB" id="408511at2759"/>
<dbReference type="PhylomeDB" id="Q9VY86"/>
<dbReference type="BioGRID-ORCS" id="32342">
    <property type="hits" value="0 hits in 1 CRISPR screen"/>
</dbReference>
<dbReference type="GenomeRNAi" id="32342"/>
<dbReference type="PRO" id="PR:Q9VY86"/>
<dbReference type="Proteomes" id="UP000000803">
    <property type="component" value="Chromosome X"/>
</dbReference>
<dbReference type="Bgee" id="FBgn0030522">
    <property type="expression patterns" value="Expressed in adult middle midgut class II enteroendocrine cell in adult midgut (Drosophila) and 57 other cell types or tissues"/>
</dbReference>
<dbReference type="GO" id="GO:0005886">
    <property type="term" value="C:plasma membrane"/>
    <property type="evidence" value="ECO:0000255"/>
    <property type="project" value="FlyBase"/>
</dbReference>
<dbReference type="GO" id="GO:0045747">
    <property type="term" value="P:positive regulation of Notch signaling pathway"/>
    <property type="evidence" value="ECO:0000316"/>
    <property type="project" value="FlyBase"/>
</dbReference>
<dbReference type="InterPro" id="IPR007829">
    <property type="entry name" value="TM2"/>
</dbReference>
<dbReference type="InterPro" id="IPR050932">
    <property type="entry name" value="TM2D1-3-like"/>
</dbReference>
<dbReference type="PANTHER" id="PTHR21016">
    <property type="entry name" value="BETA-AMYLOID BINDING PROTEIN-RELATED"/>
    <property type="match status" value="1"/>
</dbReference>
<dbReference type="PANTHER" id="PTHR21016:SF4">
    <property type="entry name" value="TM2 DOMAIN-CONTAINING PROTEIN 2"/>
    <property type="match status" value="1"/>
</dbReference>
<dbReference type="Pfam" id="PF05154">
    <property type="entry name" value="TM2"/>
    <property type="match status" value="1"/>
</dbReference>
<sequence length="224" mass="24360">MRIFYGLLAFLVARQHDAQAIQARSDKEQPQTVVSGTAVQSVVPVQAQLGSGMGPSSSSSSASSASGGAGNSAFYPLGPNVMCSFLPRDFLDCKDPVDHRENATAQQEKKYGCLKFGGSTYEEVEHAMVWCTVFADIECYGNRTFLRAGVPCVRYTDHYFVTTLIYSMLLGFLGMDRFCLGQTGTAVGKLLTMGGVGVWWIIDVILLITNNLLPEDGSNWNPYV</sequence>
<gene>
    <name evidence="4 6" type="primary">amrt</name>
    <name evidence="6" type="ORF">CG11103</name>
</gene>
<comment type="function">
    <text evidence="3">Positive regulator of Notch signaling (PubMed:34905536). Maternal neurogenic factor involved in Notch signaling-dependent neuroectodermal specification during early embryogenesis (PubMed:34905536). Functions cooperatively with amx/TM2D3 and bisc/TM2D1 (PubMed:34905536).</text>
</comment>
<comment type="subcellular location">
    <subcellularLocation>
        <location evidence="5">Membrane</location>
        <topology evidence="5">Multi-pass membrane protein</topology>
    </subcellularLocation>
</comment>
<comment type="disruption phenotype">
    <text evidence="3">Viable but females are sterile (PubMed:34905536). Reduced adult lifespan (PubMed:34905536). No morphological defects of the eye, wing, notum or leg (PubMed:34905536). Eggs produced by mutant mothers fail to hatch and embryos display neural hyperplasia (PubMed:34905536).</text>
</comment>
<comment type="miscellaneous">
    <text evidence="4">This protein is named 'amaretto' after the sweet almond flavoured Italian liqueur because of phenotypic and molecular similarities with TM2 domain-containing protein almondex.</text>
</comment>
<comment type="similarity">
    <text evidence="5">Belongs to the TM2 family.</text>
</comment>
<comment type="sequence caution" evidence="5">
    <conflict type="erroneous gene model prediction">
        <sequence resource="EMBL-CDS" id="AAF48318"/>
    </conflict>
</comment>
<comment type="sequence caution" evidence="5">
    <conflict type="erroneous initiation">
        <sequence resource="EMBL-CDS" id="AAM50867"/>
    </conflict>
</comment>